<evidence type="ECO:0000250" key="1"/>
<evidence type="ECO:0000250" key="2">
    <source>
        <dbReference type="UniProtKB" id="Q06485"/>
    </source>
</evidence>
<evidence type="ECO:0000255" key="3"/>
<evidence type="ECO:0000256" key="4">
    <source>
        <dbReference type="SAM" id="MobiDB-lite"/>
    </source>
</evidence>
<evidence type="ECO:0000305" key="5"/>
<keyword id="KW-0072">Autophagy</keyword>
<keyword id="KW-0472">Membrane</keyword>
<keyword id="KW-0496">Mitochondrion</keyword>
<keyword id="KW-0597">Phosphoprotein</keyword>
<keyword id="KW-0812">Transmembrane</keyword>
<keyword id="KW-1133">Transmembrane helix</keyword>
<protein>
    <recommendedName>
        <fullName>Autophagy-related protein 33</fullName>
    </recommendedName>
</protein>
<proteinExistence type="inferred from homology"/>
<reference key="1">
    <citation type="journal article" date="2007" name="Proc. Natl. Acad. Sci. U.S.A.">
        <title>Genome sequencing and comparative analysis of Saccharomyces cerevisiae strain YJM789.</title>
        <authorList>
            <person name="Wei W."/>
            <person name="McCusker J.H."/>
            <person name="Hyman R.W."/>
            <person name="Jones T."/>
            <person name="Ning Y."/>
            <person name="Cao Z."/>
            <person name="Gu Z."/>
            <person name="Bruno D."/>
            <person name="Miranda M."/>
            <person name="Nguyen M."/>
            <person name="Wilhelmy J."/>
            <person name="Komp C."/>
            <person name="Tamse R."/>
            <person name="Wang X."/>
            <person name="Jia P."/>
            <person name="Luedi P."/>
            <person name="Oefner P.J."/>
            <person name="David L."/>
            <person name="Dietrich F.S."/>
            <person name="Li Y."/>
            <person name="Davis R.W."/>
            <person name="Steinmetz L.M."/>
        </authorList>
    </citation>
    <scope>NUCLEOTIDE SEQUENCE [LARGE SCALE GENOMIC DNA]</scope>
    <source>
        <strain>YJM789</strain>
    </source>
</reference>
<sequence length="197" mass="20356">MSVCLAITKGIAVSSIGLYSGLLASASLITSTTPLEVLTGSLTPTLTTLKNAATALGAFASTFFCVSFFGAPPSLRHPYLLYGMLAAPLSSFVLGCASNYQSRKYSKVSKESSLFPEDSKPAASELSDSIIDLGEDNHASENTPRDGKPAATTVSKPAEALHTGPPIHTKNLIAATAIAIVGFVQAVIGVYGEGQFI</sequence>
<gene>
    <name type="primary">ATG33</name>
    <name type="ORF">SCY_3912</name>
</gene>
<comment type="function">
    <text evidence="1">Involved in the selective degradation of mitochondria via autophagy during starvation and at post-log phase.</text>
</comment>
<comment type="subcellular location">
    <subcellularLocation>
        <location evidence="5">Mitochondrion membrane</location>
        <topology evidence="5">Multi-pass membrane protein</topology>
    </subcellularLocation>
</comment>
<comment type="similarity">
    <text evidence="5">Belongs to the ATG33 family.</text>
</comment>
<organism>
    <name type="scientific">Saccharomyces cerevisiae (strain YJM789)</name>
    <name type="common">Baker's yeast</name>
    <dbReference type="NCBI Taxonomy" id="307796"/>
    <lineage>
        <taxon>Eukaryota</taxon>
        <taxon>Fungi</taxon>
        <taxon>Dikarya</taxon>
        <taxon>Ascomycota</taxon>
        <taxon>Saccharomycotina</taxon>
        <taxon>Saccharomycetes</taxon>
        <taxon>Saccharomycetales</taxon>
        <taxon>Saccharomycetaceae</taxon>
        <taxon>Saccharomyces</taxon>
    </lineage>
</organism>
<feature type="chain" id="PRO_0000399771" description="Autophagy-related protein 33">
    <location>
        <begin position="1"/>
        <end position="197"/>
    </location>
</feature>
<feature type="transmembrane region" description="Helical" evidence="3">
    <location>
        <begin position="10"/>
        <end position="30"/>
    </location>
</feature>
<feature type="transmembrane region" description="Helical" evidence="3">
    <location>
        <begin position="52"/>
        <end position="72"/>
    </location>
</feature>
<feature type="transmembrane region" description="Helical" evidence="3">
    <location>
        <begin position="78"/>
        <end position="98"/>
    </location>
</feature>
<feature type="transmembrane region" description="Helical" evidence="3">
    <location>
        <begin position="172"/>
        <end position="192"/>
    </location>
</feature>
<feature type="region of interest" description="Disordered" evidence="4">
    <location>
        <begin position="135"/>
        <end position="154"/>
    </location>
</feature>
<feature type="compositionally biased region" description="Basic and acidic residues" evidence="4">
    <location>
        <begin position="135"/>
        <end position="148"/>
    </location>
</feature>
<feature type="modified residue" description="Phosphoserine" evidence="2">
    <location>
        <position position="127"/>
    </location>
</feature>
<feature type="modified residue" description="Phosphoserine" evidence="2">
    <location>
        <position position="129"/>
    </location>
</feature>
<dbReference type="EMBL" id="AAFW02000171">
    <property type="protein sequence ID" value="EDN59262.1"/>
    <property type="molecule type" value="Genomic_DNA"/>
</dbReference>
<dbReference type="HOGENOM" id="CLU_105986_1_0_1"/>
<dbReference type="Proteomes" id="UP000007060">
    <property type="component" value="Unassembled WGS sequence"/>
</dbReference>
<dbReference type="GO" id="GO:0005741">
    <property type="term" value="C:mitochondrial outer membrane"/>
    <property type="evidence" value="ECO:0007669"/>
    <property type="project" value="TreeGrafter"/>
</dbReference>
<dbReference type="GO" id="GO:0000422">
    <property type="term" value="P:autophagy of mitochondrion"/>
    <property type="evidence" value="ECO:0007669"/>
    <property type="project" value="TreeGrafter"/>
</dbReference>
<dbReference type="GO" id="GO:0016236">
    <property type="term" value="P:macroautophagy"/>
    <property type="evidence" value="ECO:0007669"/>
    <property type="project" value="TreeGrafter"/>
</dbReference>
<dbReference type="InterPro" id="IPR051668">
    <property type="entry name" value="ATG33"/>
</dbReference>
<dbReference type="PANTHER" id="PTHR37278">
    <property type="entry name" value="AUTOPHAGY-RELATED PROTEIN 33-RELATED"/>
    <property type="match status" value="1"/>
</dbReference>
<dbReference type="PANTHER" id="PTHR37278:SF1">
    <property type="entry name" value="AUTOPHAGY-RELATED PROTEIN 33-RELATED"/>
    <property type="match status" value="1"/>
</dbReference>
<accession>A7A1N4</accession>
<name>ATG33_YEAS7</name>